<organism>
    <name type="scientific">Oryctolagus cuniculus</name>
    <name type="common">Rabbit</name>
    <dbReference type="NCBI Taxonomy" id="9986"/>
    <lineage>
        <taxon>Eukaryota</taxon>
        <taxon>Metazoa</taxon>
        <taxon>Chordata</taxon>
        <taxon>Craniata</taxon>
        <taxon>Vertebrata</taxon>
        <taxon>Euteleostomi</taxon>
        <taxon>Mammalia</taxon>
        <taxon>Eutheria</taxon>
        <taxon>Euarchontoglires</taxon>
        <taxon>Glires</taxon>
        <taxon>Lagomorpha</taxon>
        <taxon>Leporidae</taxon>
        <taxon>Oryctolagus</taxon>
    </lineage>
</organism>
<reference key="1">
    <citation type="journal article" date="2011" name="Nature">
        <title>A high-resolution map of human evolutionary constraint using 29 mammals.</title>
        <authorList>
            <person name="Lindblad-Toh K."/>
            <person name="Garber M."/>
            <person name="Zuk O."/>
            <person name="Lin M.F."/>
            <person name="Parker B.J."/>
            <person name="Washietl S."/>
            <person name="Kheradpour P."/>
            <person name="Ernst J."/>
            <person name="Jordan G."/>
            <person name="Mauceli E."/>
            <person name="Ward L.D."/>
            <person name="Lowe C.B."/>
            <person name="Holloway A.K."/>
            <person name="Clamp M."/>
            <person name="Gnerre S."/>
            <person name="Alfoldi J."/>
            <person name="Beal K."/>
            <person name="Chang J."/>
            <person name="Clawson H."/>
            <person name="Cuff J."/>
            <person name="Di Palma F."/>
            <person name="Fitzgerald S."/>
            <person name="Flicek P."/>
            <person name="Guttman M."/>
            <person name="Hubisz M.J."/>
            <person name="Jaffe D.B."/>
            <person name="Jungreis I."/>
            <person name="Kent W.J."/>
            <person name="Kostka D."/>
            <person name="Lara M."/>
            <person name="Martins A.L."/>
            <person name="Massingham T."/>
            <person name="Moltke I."/>
            <person name="Raney B.J."/>
            <person name="Rasmussen M.D."/>
            <person name="Robinson J."/>
            <person name="Stark A."/>
            <person name="Vilella A.J."/>
            <person name="Wen J."/>
            <person name="Xie X."/>
            <person name="Zody M.C."/>
            <person name="Baldwin J."/>
            <person name="Bloom T."/>
            <person name="Chin C.W."/>
            <person name="Heiman D."/>
            <person name="Nicol R."/>
            <person name="Nusbaum C."/>
            <person name="Young S."/>
            <person name="Wilkinson J."/>
            <person name="Worley K.C."/>
            <person name="Kovar C.L."/>
            <person name="Muzny D.M."/>
            <person name="Gibbs R.A."/>
            <person name="Cree A."/>
            <person name="Dihn H.H."/>
            <person name="Fowler G."/>
            <person name="Jhangiani S."/>
            <person name="Joshi V."/>
            <person name="Lee S."/>
            <person name="Lewis L.R."/>
            <person name="Nazareth L.V."/>
            <person name="Okwuonu G."/>
            <person name="Santibanez J."/>
            <person name="Warren W.C."/>
            <person name="Mardis E.R."/>
            <person name="Weinstock G.M."/>
            <person name="Wilson R.K."/>
            <person name="Delehaunty K."/>
            <person name="Dooling D."/>
            <person name="Fronik C."/>
            <person name="Fulton L."/>
            <person name="Fulton B."/>
            <person name="Graves T."/>
            <person name="Minx P."/>
            <person name="Sodergren E."/>
            <person name="Birney E."/>
            <person name="Margulies E.H."/>
            <person name="Herrero J."/>
            <person name="Green E.D."/>
            <person name="Haussler D."/>
            <person name="Siepel A."/>
            <person name="Goldman N."/>
            <person name="Pollard K.S."/>
            <person name="Pedersen J.S."/>
            <person name="Lander E.S."/>
            <person name="Kellis M."/>
        </authorList>
    </citation>
    <scope>NUCLEOTIDE SEQUENCE [LARGE SCALE GENOMIC DNA]</scope>
    <source>
        <strain>Thorbecke</strain>
    </source>
</reference>
<reference evidence="22 23" key="2">
    <citation type="journal article" date="2013" name="Nature">
        <title>The initiation of mammalian protein synthesis and mRNA scanning mechanism.</title>
        <authorList>
            <person name="Lomakin I.B."/>
            <person name="Steitz T.A."/>
        </authorList>
    </citation>
    <scope>X-RAY CRYSTALLOGRAPHY (7.01 ANGSTROMS) OF 40S RIBOSOME</scope>
    <scope>FUNCTION</scope>
    <scope>SUBUNIT</scope>
    <scope>SUBCELLULAR LOCATION</scope>
</reference>
<reference evidence="20 21" key="3">
    <citation type="journal article" date="2015" name="Mol. Cell">
        <title>Cryo-EM of ribosomal 80S complexes with termination factors reveals the translocated cricket paralysis virus IRES.</title>
        <authorList>
            <person name="Muhs M."/>
            <person name="Hilal T."/>
            <person name="Mielke T."/>
            <person name="Skabkin M.A."/>
            <person name="Sanbonmatsu K.Y."/>
            <person name="Pestova T.V."/>
            <person name="Spahn C.M."/>
        </authorList>
    </citation>
    <scope>STRUCTURE BY ELECTRON MICROSCOPY (9.00 ANGSTROMS)IN COMPLEX WITH ZINC AND RIBOSOME</scope>
    <scope>FUNCTION</scope>
    <scope>SUBUNIT</scope>
    <scope>SUBCELLULAR LOCATION</scope>
</reference>
<reference evidence="18 19" key="4">
    <citation type="journal article" date="2015" name="Nature">
        <title>Structural basis for stop codon recognition in eukaryotes.</title>
        <authorList>
            <person name="Brown A."/>
            <person name="Shao S."/>
            <person name="Murray J."/>
            <person name="Hegde R.S."/>
            <person name="Ramakrishnan V."/>
        </authorList>
    </citation>
    <scope>STRUCTURE BY ELECTRON MICROSCOPY (3.45 ANGSTROMS) OF RIBOSOME</scope>
    <scope>FUNCTION</scope>
    <scope>SUBUNIT</scope>
    <scope>SUBCELLULAR LOCATION</scope>
</reference>
<reference evidence="24" key="5">
    <citation type="journal article" date="2016" name="Cell">
        <title>Decoding mammalian ribosome-mRNA states by translational GTPase complexes.</title>
        <authorList>
            <person name="Shao S."/>
            <person name="Murray J."/>
            <person name="Brown A."/>
            <person name="Taunton J."/>
            <person name="Ramakrishnan V."/>
            <person name="Hegde R.S."/>
        </authorList>
    </citation>
    <scope>STRUCTURE BY ELECTRON MICROSCOPY (3.31 ANGSTROMS) OF RIBOSOME</scope>
    <scope>FUNCTION</scope>
    <scope>SUBCELLULAR LOCATION</scope>
    <scope>SUBUNIT</scope>
</reference>
<reference evidence="25" key="6">
    <citation type="journal article" date="2018" name="Elife">
        <title>Dual tRNA mimicry in the Cricket paralysis virus IRES uncovers an unexpected similarity with the Hepatitis C Virus IRES.</title>
        <authorList>
            <person name="Pisareva V.P."/>
            <person name="Pisarev A.V."/>
            <person name="Fernandez I.S."/>
        </authorList>
    </citation>
    <scope>STRUCTURE BY ELECTRON MICROSCOPY (3.20 ANGSTROMS) OF RIBOSOME</scope>
    <scope>SUBUNIT</scope>
    <scope>SUBCELLULAR LOCATION</scope>
</reference>
<reference evidence="27 28" key="7">
    <citation type="journal article" date="2018" name="Mol. Cell">
        <title>ZNF598 is a quality control sensor of collided ribosomes.</title>
        <authorList>
            <person name="Juszkiewicz S."/>
            <person name="Chandrasekaran V."/>
            <person name="Lin Z."/>
            <person name="Kraatz S."/>
            <person name="Ramakrishnan V."/>
            <person name="Hegde R.S."/>
        </authorList>
    </citation>
    <scope>STRUCTURE BY ELECTRON MICROSCOPY (3.80 ANGSTROMS) OF RIBOSOME</scope>
    <scope>SUBCELLULAR LOCATION</scope>
    <scope>SUBUNIT</scope>
</reference>
<reference evidence="31 32" key="8">
    <citation type="journal article" date="2019" name="Elife">
        <title>Structural and mutational analysis of the ribosome-arresting human XBP1u.</title>
        <authorList>
            <person name="Shanmuganathan V."/>
            <person name="Schiller N."/>
            <person name="Magoulopoulou A."/>
            <person name="Cheng J."/>
            <person name="Braunger K."/>
            <person name="Cymer F."/>
            <person name="Berninghausen O."/>
            <person name="Beatrix B."/>
            <person name="Kohno K."/>
            <person name="von Heijne G."/>
            <person name="Beckmann R."/>
        </authorList>
    </citation>
    <scope>STRUCTURE BY ELECTRON MICROSCOPY (3.00 ANGSTROMS) OF RIBOSOME</scope>
    <scope>SUBCELLULAR LOCATION</scope>
    <scope>SUBUNIT</scope>
</reference>
<reference evidence="26 29 30" key="9">
    <citation type="journal article" date="2019" name="EMBO J.">
        <title>The Israeli acute paralysis virus IRES captures host ribosomes by mimicking a ribosomal state with hybrid tRNAs.</title>
        <authorList>
            <person name="Acosta-Reyes F."/>
            <person name="Neupane R."/>
            <person name="Frank J."/>
            <person name="Fernandez I.S."/>
        </authorList>
    </citation>
    <scope>STRUCTURE BY ELECTRON MICROSCOPY (3.10 ANGSTROMS) OF RIBOSOME</scope>
    <scope>SUBUNIT</scope>
    <scope>SUBCELLULAR LOCATION</scope>
</reference>
<reference evidence="33" key="10">
    <citation type="journal article" date="2019" name="Nat. Struct. Mol. Biol.">
        <title>Mechanism of ribosome stalling during translation of a poly(A) tail.</title>
        <authorList>
            <person name="Chandrasekaran V."/>
            <person name="Juszkiewicz S."/>
            <person name="Choi J."/>
            <person name="Puglisi J.D."/>
            <person name="Brown A."/>
            <person name="Shao S."/>
            <person name="Ramakrishnan V."/>
            <person name="Hegde R.S."/>
        </authorList>
    </citation>
    <scope>STRUCTURE BY ELECTRON MICROSCOPY (2.80 ANGSTROMS) OF RIBOSOME</scope>
    <scope>SUBCELLULAR LOCATION</scope>
    <scope>SUBUNIT</scope>
</reference>
<reference evidence="34 35" key="11">
    <citation type="journal article" date="2020" name="Cell Rep.">
        <title>The Halastavi arva virus intergenic region IRES promotes translation by the simplest possible initiation mechanism.</title>
        <authorList>
            <person name="Abaeva I.S."/>
            <person name="Vicens Q."/>
            <person name="Bochler A."/>
            <person name="Soufari H."/>
            <person name="Simonetti A."/>
            <person name="Pestova T.V."/>
            <person name="Hashem Y."/>
            <person name="Hellen C.U.T."/>
        </authorList>
    </citation>
    <scope>STRUCTURE BY ELECTRON MICROSCOPY (3.49 ANGSTROMS) OF RIBOSOME</scope>
    <scope>SUBCELLULAR LOCATION</scope>
    <scope>SUBUNIT</scope>
</reference>
<reference evidence="37 38" key="12">
    <citation type="journal article" date="2022" name="EMBO J.">
        <title>Molecular architecture of 40S translation initiation complexes on the hepatitis C virus IRES.</title>
        <authorList>
            <person name="Brown Z.P."/>
            <person name="Abaeva I.S."/>
            <person name="De S."/>
            <person name="Hellen C.U.T."/>
            <person name="Pestova T.V."/>
            <person name="Frank J."/>
        </authorList>
    </citation>
    <scope>STRUCTURE BY ELECTRON MICROSCOPY (3.50 ANGSTROMS) OF RIBOSOME</scope>
    <scope>SUBCELLULAR LOCATION</scope>
    <scope>SUBUNIT</scope>
</reference>
<reference evidence="39 40" key="13">
    <citation type="journal article" date="2022" name="Mol. Cell">
        <title>Direct epitranscriptomic regulation of mammalian translation initiation through N4-acetylcytidine.</title>
        <authorList>
            <person name="Arango D."/>
            <person name="Sturgill D."/>
            <person name="Yang R."/>
            <person name="Kanai T."/>
            <person name="Bauer P."/>
            <person name="Roy J."/>
            <person name="Wang Z."/>
            <person name="Hosogane M."/>
            <person name="Schiffers S."/>
            <person name="Oberdoerffer S."/>
        </authorList>
    </citation>
    <scope>STRUCTURE BY ELECTRON MICROSCOPY (2.80 ANGSTROMS) OF RIBOSOME</scope>
    <scope>SUBCELLULAR LOCATION</scope>
    <scope>SUBUNIT</scope>
</reference>
<reference evidence="36" key="14">
    <citation type="journal article" date="2023" name="Nature">
        <title>A molecular network of conserved factors keeps ribosomes dormant in the egg.</title>
        <authorList>
            <person name="Leesch F."/>
            <person name="Lorenzo-Orts L."/>
            <person name="Pribitzer C."/>
            <person name="Grishkovskaya I."/>
            <person name="Roehsner J."/>
            <person name="Chugunova A."/>
            <person name="Matzinger M."/>
            <person name="Roitinger E."/>
            <person name="Belacic K."/>
            <person name="Kandolf S."/>
            <person name="Lin T.Y."/>
            <person name="Mechtler K."/>
            <person name="Meinhart A."/>
            <person name="Haselbach D."/>
            <person name="Pauli A."/>
        </authorList>
    </citation>
    <scope>STRUCTURE BY ELECTRON MICROSCOPY (2.30 ANGSTROMS) OF RIBOSOME</scope>
    <scope>SUBCELLULAR LOCATION</scope>
    <scope>SUBUNIT</scope>
</reference>
<proteinExistence type="evidence at protein level"/>
<comment type="function">
    <text evidence="1 4 5 6 7">Component of the small ribosomal subunit (PubMed:23873042, PubMed:25601755, PubMed:26245381, PubMed:27863242). The ribosome is a large ribonucleoprotein complex responsible for the synthesis of proteins in the cell (PubMed:23873042, PubMed:25601755, PubMed:26245381, PubMed:27863242). Required for proper rRNA processing and maturation of 18S rRNAs (PubMed:23873042, PubMed:25601755, PubMed:26245381, PubMed:27863242). Part of the small subunit (SSU) processome, first precursor of the small eukaryotic ribosomal subunit (PubMed:23873042, PubMed:25601755, PubMed:26245381, PubMed:27863242). During the assembly of the SSU processome in the nucleolus, many ribosome biogenesis factors, an RNA chaperone and ribosomal proteins associate with the nascent pre-rRNA and work in concert to generate RNA folding, modifications, rearrangements and cleavage as well as targeted degradation of pre-ribosomal RNA by the RNA exosome (By similarity).</text>
</comment>
<comment type="cofactor">
    <cofactor evidence="1">
        <name>Zn(2+)</name>
        <dbReference type="ChEBI" id="CHEBI:29105"/>
    </cofactor>
    <text evidence="1">Binds 1 zinc ion per subunit.</text>
</comment>
<comment type="subunit">
    <text evidence="4 5 6 7 8 9 10 11 12 13 14 15 16">Component of the small ribosomal subunit (PubMed:23873042, PubMed:25601755, PubMed:26245381, PubMed:27863242, PubMed:29856316, PubMed:30293783, PubMed:31246176, PubMed:31609474, PubMed:31768042, PubMed:33296660, PubMed:35679869, PubMed:35822879, PubMed:36653451). Part of the small subunit (SSU) processome, composed of more than 70 proteins and the RNA chaperone small nucleolar RNA (snoRNA) U3 (PubMed:23873042, PubMed:25601755, PubMed:26245381, PubMed:27863242, PubMed:29856316, PubMed:30293783, PubMed:31246176, PubMed:31609474, PubMed:31768042, PubMed:33296660, PubMed:35679869, PubMed:35822879, PubMed:36653451).</text>
</comment>
<comment type="subcellular location">
    <subcellularLocation>
        <location evidence="4 5 6 7 8 9 10 11 12 13 14 15 16">Cytoplasm</location>
    </subcellularLocation>
    <subcellularLocation>
        <location evidence="1">Nucleus</location>
        <location evidence="1">Nucleolus</location>
    </subcellularLocation>
</comment>
<comment type="similarity">
    <text evidence="17">Belongs to the eukaryotic ribosomal protein eS27 family.</text>
</comment>
<protein>
    <recommendedName>
        <fullName>Small ribosomal subunit protein eS27</fullName>
    </recommendedName>
    <alternativeName>
        <fullName>40S ribosomal protein S27</fullName>
    </alternativeName>
</protein>
<evidence type="ECO:0000250" key="1">
    <source>
        <dbReference type="UniProtKB" id="P42677"/>
    </source>
</evidence>
<evidence type="ECO:0000255" key="2"/>
<evidence type="ECO:0000256" key="3">
    <source>
        <dbReference type="SAM" id="MobiDB-lite"/>
    </source>
</evidence>
<evidence type="ECO:0000269" key="4">
    <source>
    </source>
</evidence>
<evidence type="ECO:0000269" key="5">
    <source>
    </source>
</evidence>
<evidence type="ECO:0000269" key="6">
    <source>
    </source>
</evidence>
<evidence type="ECO:0000269" key="7">
    <source>
    </source>
</evidence>
<evidence type="ECO:0000269" key="8">
    <source>
    </source>
</evidence>
<evidence type="ECO:0000269" key="9">
    <source>
    </source>
</evidence>
<evidence type="ECO:0000269" key="10">
    <source>
    </source>
</evidence>
<evidence type="ECO:0000269" key="11">
    <source>
    </source>
</evidence>
<evidence type="ECO:0000269" key="12">
    <source>
    </source>
</evidence>
<evidence type="ECO:0000269" key="13">
    <source>
    </source>
</evidence>
<evidence type="ECO:0000269" key="14">
    <source>
    </source>
</evidence>
<evidence type="ECO:0000269" key="15">
    <source>
    </source>
</evidence>
<evidence type="ECO:0000269" key="16">
    <source>
    </source>
</evidence>
<evidence type="ECO:0000305" key="17"/>
<evidence type="ECO:0007744" key="18">
    <source>
        <dbReference type="PDB" id="3JAG"/>
    </source>
</evidence>
<evidence type="ECO:0007744" key="19">
    <source>
        <dbReference type="PDB" id="3JAH"/>
    </source>
</evidence>
<evidence type="ECO:0007744" key="20">
    <source>
        <dbReference type="PDB" id="4D5L"/>
    </source>
</evidence>
<evidence type="ECO:0007744" key="21">
    <source>
        <dbReference type="PDB" id="4D61"/>
    </source>
</evidence>
<evidence type="ECO:0007744" key="22">
    <source>
        <dbReference type="PDB" id="4KZX"/>
    </source>
</evidence>
<evidence type="ECO:0007744" key="23">
    <source>
        <dbReference type="PDB" id="4KZY"/>
    </source>
</evidence>
<evidence type="ECO:0007744" key="24">
    <source>
        <dbReference type="PDB" id="5LZU"/>
    </source>
</evidence>
<evidence type="ECO:0007744" key="25">
    <source>
        <dbReference type="PDB" id="6D90"/>
    </source>
</evidence>
<evidence type="ECO:0007744" key="26">
    <source>
        <dbReference type="PDB" id="6D9J"/>
    </source>
</evidence>
<evidence type="ECO:0007744" key="27">
    <source>
        <dbReference type="PDB" id="6HCF"/>
    </source>
</evidence>
<evidence type="ECO:0007744" key="28">
    <source>
        <dbReference type="PDB" id="6HCJ"/>
    </source>
</evidence>
<evidence type="ECO:0007744" key="29">
    <source>
        <dbReference type="PDB" id="6P4G"/>
    </source>
</evidence>
<evidence type="ECO:0007744" key="30">
    <source>
        <dbReference type="PDB" id="6P4H"/>
    </source>
</evidence>
<evidence type="ECO:0007744" key="31">
    <source>
        <dbReference type="PDB" id="6R5Q"/>
    </source>
</evidence>
<evidence type="ECO:0007744" key="32">
    <source>
        <dbReference type="PDB" id="6R6G"/>
    </source>
</evidence>
<evidence type="ECO:0007744" key="33">
    <source>
        <dbReference type="PDB" id="6SGC"/>
    </source>
</evidence>
<evidence type="ECO:0007744" key="34">
    <source>
        <dbReference type="PDB" id="6ZVK"/>
    </source>
</evidence>
<evidence type="ECO:0007744" key="35">
    <source>
        <dbReference type="PDB" id="7A01"/>
    </source>
</evidence>
<evidence type="ECO:0007744" key="36">
    <source>
        <dbReference type="PDB" id="7OYD"/>
    </source>
</evidence>
<evidence type="ECO:0007744" key="37">
    <source>
        <dbReference type="PDB" id="7SYI"/>
    </source>
</evidence>
<evidence type="ECO:0007744" key="38">
    <source>
        <dbReference type="PDB" id="7SYJ"/>
    </source>
</evidence>
<evidence type="ECO:0007744" key="39">
    <source>
        <dbReference type="PDB" id="7UCJ"/>
    </source>
</evidence>
<evidence type="ECO:0007744" key="40">
    <source>
        <dbReference type="PDB" id="7UCK"/>
    </source>
</evidence>
<evidence type="ECO:0007829" key="41">
    <source>
        <dbReference type="PDB" id="6P4H"/>
    </source>
</evidence>
<evidence type="ECO:0007829" key="42">
    <source>
        <dbReference type="PDB" id="6YAL"/>
    </source>
</evidence>
<evidence type="ECO:0007829" key="43">
    <source>
        <dbReference type="PDB" id="7JQB"/>
    </source>
</evidence>
<evidence type="ECO:0007829" key="44">
    <source>
        <dbReference type="PDB" id="8P03"/>
    </source>
</evidence>
<feature type="initiator methionine" description="Removed" evidence="1">
    <location>
        <position position="1"/>
    </location>
</feature>
<feature type="chain" id="PRO_0000460077" description="Small ribosomal subunit protein eS27">
    <location>
        <begin position="2"/>
        <end position="84"/>
    </location>
</feature>
<feature type="zinc finger region" description="C4-type" evidence="2">
    <location>
        <begin position="37"/>
        <end position="59"/>
    </location>
</feature>
<feature type="region of interest" description="Disordered" evidence="3">
    <location>
        <begin position="1"/>
        <end position="23"/>
    </location>
</feature>
<feature type="compositionally biased region" description="Basic and acidic residues" evidence="3">
    <location>
        <begin position="1"/>
        <end position="16"/>
    </location>
</feature>
<feature type="binding site" evidence="5 20 21">
    <location>
        <position position="37"/>
    </location>
    <ligand>
        <name>Zn(2+)</name>
        <dbReference type="ChEBI" id="CHEBI:29105"/>
    </ligand>
</feature>
<feature type="binding site" evidence="5 20 21">
    <location>
        <position position="40"/>
    </location>
    <ligand>
        <name>Zn(2+)</name>
        <dbReference type="ChEBI" id="CHEBI:29105"/>
    </ligand>
</feature>
<feature type="binding site" evidence="5 20 21">
    <location>
        <position position="56"/>
    </location>
    <ligand>
        <name>Zn(2+)</name>
        <dbReference type="ChEBI" id="CHEBI:29105"/>
    </ligand>
</feature>
<feature type="binding site" evidence="5 20 21">
    <location>
        <position position="59"/>
    </location>
    <ligand>
        <name>Zn(2+)</name>
        <dbReference type="ChEBI" id="CHEBI:29105"/>
    </ligand>
</feature>
<feature type="modified residue" description="Phosphoserine" evidence="1">
    <location>
        <position position="11"/>
    </location>
</feature>
<feature type="strand" evidence="43">
    <location>
        <begin position="7"/>
        <end position="9"/>
    </location>
</feature>
<feature type="helix" evidence="43">
    <location>
        <begin position="13"/>
        <end position="16"/>
    </location>
</feature>
<feature type="strand" evidence="43">
    <location>
        <begin position="20"/>
        <end position="25"/>
    </location>
</feature>
<feature type="strand" evidence="43">
    <location>
        <begin position="32"/>
        <end position="35"/>
    </location>
</feature>
<feature type="strand" evidence="42">
    <location>
        <begin position="38"/>
        <end position="40"/>
    </location>
</feature>
<feature type="strand" evidence="43">
    <location>
        <begin position="45"/>
        <end position="49"/>
    </location>
</feature>
<feature type="strand" evidence="42">
    <location>
        <begin position="57"/>
        <end position="59"/>
    </location>
</feature>
<feature type="strand" evidence="41">
    <location>
        <begin position="60"/>
        <end position="65"/>
    </location>
</feature>
<feature type="strand" evidence="43">
    <location>
        <begin position="68"/>
        <end position="70"/>
    </location>
</feature>
<feature type="strand" evidence="42">
    <location>
        <begin position="72"/>
        <end position="75"/>
    </location>
</feature>
<feature type="strand" evidence="44">
    <location>
        <begin position="77"/>
        <end position="81"/>
    </location>
</feature>
<sequence length="84" mass="9461">MPLAKDLLHPSPEEEKRKHKKKRLVQSPNSYFMDVKCPGCYKITTVFSHAQTVVLCVGCSTVLCQPTGGKARLTEGCSFRRKQH</sequence>
<accession>G1TZ76</accession>
<name>RS27_RABIT</name>
<keyword id="KW-0002">3D-structure</keyword>
<keyword id="KW-0963">Cytoplasm</keyword>
<keyword id="KW-0479">Metal-binding</keyword>
<keyword id="KW-0539">Nucleus</keyword>
<keyword id="KW-0597">Phosphoprotein</keyword>
<keyword id="KW-1185">Reference proteome</keyword>
<keyword id="KW-0687">Ribonucleoprotein</keyword>
<keyword id="KW-0689">Ribosomal protein</keyword>
<keyword id="KW-0862">Zinc</keyword>
<keyword id="KW-0863">Zinc-finger</keyword>
<gene>
    <name type="primary">RPS27</name>
</gene>
<dbReference type="EMBL" id="AAGW02000499">
    <property type="status" value="NOT_ANNOTATED_CDS"/>
    <property type="molecule type" value="Genomic_DNA"/>
</dbReference>
<dbReference type="EMBL" id="AAGW02000817">
    <property type="status" value="NOT_ANNOTATED_CDS"/>
    <property type="molecule type" value="Genomic_DNA"/>
</dbReference>
<dbReference type="EMBL" id="AAGW02025095">
    <property type="status" value="NOT_ANNOTATED_CDS"/>
    <property type="molecule type" value="Genomic_DNA"/>
</dbReference>
<dbReference type="EMBL" id="AAGW02048517">
    <property type="status" value="NOT_ANNOTATED_CDS"/>
    <property type="molecule type" value="Genomic_DNA"/>
</dbReference>
<dbReference type="RefSeq" id="XP_002708254.1">
    <property type="nucleotide sequence ID" value="XM_002708208.3"/>
</dbReference>
<dbReference type="RefSeq" id="XP_002715522.1">
    <property type="nucleotide sequence ID" value="XM_002715476.5"/>
</dbReference>
<dbReference type="RefSeq" id="XP_002718158.1">
    <property type="nucleotide sequence ID" value="XM_002718112.3"/>
</dbReference>
<dbReference type="PDB" id="3JAG">
    <property type="method" value="EM"/>
    <property type="resolution" value="3.65 A"/>
    <property type="chains" value="bb=2-84"/>
</dbReference>
<dbReference type="PDB" id="3JAH">
    <property type="method" value="EM"/>
    <property type="resolution" value="3.45 A"/>
    <property type="chains" value="bb=2-84"/>
</dbReference>
<dbReference type="PDB" id="3JAI">
    <property type="method" value="EM"/>
    <property type="resolution" value="3.65 A"/>
    <property type="chains" value="bb=2-84"/>
</dbReference>
<dbReference type="PDB" id="4D5L">
    <property type="method" value="EM"/>
    <property type="resolution" value="9.00 A"/>
    <property type="chains" value="b=1-84"/>
</dbReference>
<dbReference type="PDB" id="4D61">
    <property type="method" value="EM"/>
    <property type="resolution" value="9.00 A"/>
    <property type="chains" value="b=1-84"/>
</dbReference>
<dbReference type="PDB" id="4KZX">
    <property type="method" value="X-ray"/>
    <property type="resolution" value="7.81 A"/>
    <property type="chains" value="b=1-84"/>
</dbReference>
<dbReference type="PDB" id="4KZY">
    <property type="method" value="X-ray"/>
    <property type="resolution" value="7.01 A"/>
    <property type="chains" value="b=1-84"/>
</dbReference>
<dbReference type="PDB" id="4KZZ">
    <property type="method" value="X-ray"/>
    <property type="resolution" value="7.03 A"/>
    <property type="chains" value="b=1-84"/>
</dbReference>
<dbReference type="PDB" id="5K0Y">
    <property type="method" value="EM"/>
    <property type="resolution" value="5.80 A"/>
    <property type="chains" value="Y=1-84"/>
</dbReference>
<dbReference type="PDB" id="5LZS">
    <property type="method" value="EM"/>
    <property type="resolution" value="3.31 A"/>
    <property type="chains" value="bb=1-84"/>
</dbReference>
<dbReference type="PDB" id="5LZT">
    <property type="method" value="EM"/>
    <property type="resolution" value="3.65 A"/>
    <property type="chains" value="bb=1-84"/>
</dbReference>
<dbReference type="PDB" id="5LZU">
    <property type="method" value="EM"/>
    <property type="resolution" value="3.75 A"/>
    <property type="chains" value="bb=1-84"/>
</dbReference>
<dbReference type="PDB" id="5LZV">
    <property type="method" value="EM"/>
    <property type="resolution" value="3.35 A"/>
    <property type="chains" value="bb=1-84"/>
</dbReference>
<dbReference type="PDB" id="5LZW">
    <property type="method" value="EM"/>
    <property type="resolution" value="3.53 A"/>
    <property type="chains" value="bb=1-84"/>
</dbReference>
<dbReference type="PDB" id="5LZX">
    <property type="method" value="EM"/>
    <property type="resolution" value="3.67 A"/>
    <property type="chains" value="bb=1-84"/>
</dbReference>
<dbReference type="PDB" id="5LZY">
    <property type="method" value="EM"/>
    <property type="resolution" value="3.99 A"/>
    <property type="chains" value="bb=1-84"/>
</dbReference>
<dbReference type="PDB" id="5LZZ">
    <property type="method" value="EM"/>
    <property type="resolution" value="3.47 A"/>
    <property type="chains" value="bb=1-84"/>
</dbReference>
<dbReference type="PDB" id="6D90">
    <property type="method" value="EM"/>
    <property type="resolution" value="3.20 A"/>
    <property type="chains" value="cc=1-84"/>
</dbReference>
<dbReference type="PDB" id="6D9J">
    <property type="method" value="EM"/>
    <property type="resolution" value="3.20 A"/>
    <property type="chains" value="cc=1-84"/>
</dbReference>
<dbReference type="PDB" id="6HCF">
    <property type="method" value="EM"/>
    <property type="resolution" value="3.90 A"/>
    <property type="chains" value="c1=1-84"/>
</dbReference>
<dbReference type="PDB" id="6HCJ">
    <property type="method" value="EM"/>
    <property type="resolution" value="3.80 A"/>
    <property type="chains" value="c2=1-84"/>
</dbReference>
<dbReference type="PDB" id="6HCM">
    <property type="method" value="EM"/>
    <property type="resolution" value="6.80 A"/>
    <property type="chains" value="c1=1-84"/>
</dbReference>
<dbReference type="PDB" id="6HCQ">
    <property type="method" value="EM"/>
    <property type="resolution" value="6.50 A"/>
    <property type="chains" value="c2=1-84"/>
</dbReference>
<dbReference type="PDB" id="6P4G">
    <property type="method" value="EM"/>
    <property type="resolution" value="3.10 A"/>
    <property type="chains" value="c=1-84"/>
</dbReference>
<dbReference type="PDB" id="6P4H">
    <property type="method" value="EM"/>
    <property type="resolution" value="3.20 A"/>
    <property type="chains" value="c=1-84"/>
</dbReference>
<dbReference type="PDB" id="6P5I">
    <property type="method" value="EM"/>
    <property type="resolution" value="3.10 A"/>
    <property type="chains" value="c=1-84"/>
</dbReference>
<dbReference type="PDB" id="6P5J">
    <property type="method" value="EM"/>
    <property type="resolution" value="3.10 A"/>
    <property type="chains" value="c=1-84"/>
</dbReference>
<dbReference type="PDB" id="6P5K">
    <property type="method" value="EM"/>
    <property type="resolution" value="3.10 A"/>
    <property type="chains" value="c=1-84"/>
</dbReference>
<dbReference type="PDB" id="6P5N">
    <property type="method" value="EM"/>
    <property type="resolution" value="3.20 A"/>
    <property type="chains" value="c=1-84"/>
</dbReference>
<dbReference type="PDB" id="6R5Q">
    <property type="method" value="EM"/>
    <property type="resolution" value="3.00 A"/>
    <property type="chains" value="JJ=2-84"/>
</dbReference>
<dbReference type="PDB" id="6R6G">
    <property type="method" value="EM"/>
    <property type="resolution" value="3.70 A"/>
    <property type="chains" value="JJ=2-84"/>
</dbReference>
<dbReference type="PDB" id="6R6P">
    <property type="method" value="EM"/>
    <property type="resolution" value="3.10 A"/>
    <property type="chains" value="JJ=2-84"/>
</dbReference>
<dbReference type="PDB" id="6R7Q">
    <property type="method" value="EM"/>
    <property type="resolution" value="3.90 A"/>
    <property type="chains" value="JJ=2-84"/>
</dbReference>
<dbReference type="PDB" id="6SGC">
    <property type="method" value="EM"/>
    <property type="resolution" value="2.80 A"/>
    <property type="chains" value="c1=1-84"/>
</dbReference>
<dbReference type="PDB" id="6W2S">
    <property type="method" value="EM"/>
    <property type="resolution" value="3.00 A"/>
    <property type="chains" value="c=1-84"/>
</dbReference>
<dbReference type="PDB" id="6W2T">
    <property type="method" value="EM"/>
    <property type="resolution" value="3.36 A"/>
    <property type="chains" value="c=1-84"/>
</dbReference>
<dbReference type="PDB" id="6YAL">
    <property type="method" value="EM"/>
    <property type="resolution" value="3.00 A"/>
    <property type="chains" value="c=1-84"/>
</dbReference>
<dbReference type="PDB" id="6YAM">
    <property type="method" value="EM"/>
    <property type="resolution" value="3.60 A"/>
    <property type="chains" value="c=1-84"/>
</dbReference>
<dbReference type="PDB" id="6YAN">
    <property type="method" value="EM"/>
    <property type="resolution" value="3.48 A"/>
    <property type="chains" value="c=1-84"/>
</dbReference>
<dbReference type="PDB" id="6ZVK">
    <property type="method" value="EM"/>
    <property type="resolution" value="3.49 A"/>
    <property type="chains" value="L3=2-84"/>
</dbReference>
<dbReference type="PDB" id="7A01">
    <property type="method" value="EM"/>
    <property type="resolution" value="3.60 A"/>
    <property type="chains" value="L3=2-84"/>
</dbReference>
<dbReference type="PDB" id="7JQB">
    <property type="method" value="EM"/>
    <property type="resolution" value="2.70 A"/>
    <property type="chains" value="e=1-84"/>
</dbReference>
<dbReference type="PDB" id="7JQC">
    <property type="method" value="EM"/>
    <property type="resolution" value="3.30 A"/>
    <property type="chains" value="e=1-84"/>
</dbReference>
<dbReference type="PDB" id="7MDZ">
    <property type="method" value="EM"/>
    <property type="resolution" value="3.20 A"/>
    <property type="chains" value="bb=1-84"/>
</dbReference>
<dbReference type="PDB" id="7NWG">
    <property type="method" value="EM"/>
    <property type="resolution" value="3.80 A"/>
    <property type="chains" value="c2=1-84"/>
</dbReference>
<dbReference type="PDB" id="7NWI">
    <property type="method" value="EM"/>
    <property type="resolution" value="3.13 A"/>
    <property type="chains" value="bb=1-84"/>
</dbReference>
<dbReference type="PDB" id="7O7Y">
    <property type="method" value="EM"/>
    <property type="resolution" value="2.20 A"/>
    <property type="chains" value="AA=1-84"/>
</dbReference>
<dbReference type="PDB" id="7O7Z">
    <property type="method" value="EM"/>
    <property type="resolution" value="2.40 A"/>
    <property type="chains" value="AA=1-84"/>
</dbReference>
<dbReference type="PDB" id="7O80">
    <property type="method" value="EM"/>
    <property type="resolution" value="2.90 A"/>
    <property type="chains" value="AA=1-84"/>
</dbReference>
<dbReference type="PDB" id="7O81">
    <property type="method" value="EM"/>
    <property type="resolution" value="3.10 A"/>
    <property type="chains" value="AA=1-84"/>
</dbReference>
<dbReference type="PDB" id="7OYD">
    <property type="method" value="EM"/>
    <property type="resolution" value="2.30 A"/>
    <property type="chains" value="Bb=1-84"/>
</dbReference>
<dbReference type="PDB" id="7SYG">
    <property type="method" value="EM"/>
    <property type="resolution" value="4.30 A"/>
    <property type="chains" value="c=1-84"/>
</dbReference>
<dbReference type="PDB" id="7SYH">
    <property type="method" value="EM"/>
    <property type="resolution" value="4.60 A"/>
    <property type="chains" value="c=1-84"/>
</dbReference>
<dbReference type="PDB" id="7SYI">
    <property type="method" value="EM"/>
    <property type="resolution" value="4.50 A"/>
    <property type="chains" value="c=1-84"/>
</dbReference>
<dbReference type="PDB" id="7SYJ">
    <property type="method" value="EM"/>
    <property type="resolution" value="4.80 A"/>
    <property type="chains" value="c=1-84"/>
</dbReference>
<dbReference type="PDB" id="7SYK">
    <property type="method" value="EM"/>
    <property type="resolution" value="4.20 A"/>
    <property type="chains" value="c=1-84"/>
</dbReference>
<dbReference type="PDB" id="7SYL">
    <property type="method" value="EM"/>
    <property type="resolution" value="4.50 A"/>
    <property type="chains" value="c=1-84"/>
</dbReference>
<dbReference type="PDB" id="7SYM">
    <property type="method" value="EM"/>
    <property type="resolution" value="4.80 A"/>
    <property type="chains" value="c=1-84"/>
</dbReference>
<dbReference type="PDB" id="7SYN">
    <property type="method" value="EM"/>
    <property type="resolution" value="4.00 A"/>
    <property type="chains" value="c=1-84"/>
</dbReference>
<dbReference type="PDB" id="7SYO">
    <property type="method" value="EM"/>
    <property type="resolution" value="4.60 A"/>
    <property type="chains" value="c=1-84"/>
</dbReference>
<dbReference type="PDB" id="7SYP">
    <property type="method" value="EM"/>
    <property type="resolution" value="4.00 A"/>
    <property type="chains" value="c=1-84"/>
</dbReference>
<dbReference type="PDB" id="7SYQ">
    <property type="method" value="EM"/>
    <property type="resolution" value="3.80 A"/>
    <property type="chains" value="c=1-84"/>
</dbReference>
<dbReference type="PDB" id="7SYR">
    <property type="method" value="EM"/>
    <property type="resolution" value="3.60 A"/>
    <property type="chains" value="c=1-84"/>
</dbReference>
<dbReference type="PDB" id="7SYS">
    <property type="method" value="EM"/>
    <property type="resolution" value="3.50 A"/>
    <property type="chains" value="c=1-84"/>
</dbReference>
<dbReference type="PDB" id="7SYT">
    <property type="method" value="EM"/>
    <property type="resolution" value="4.40 A"/>
    <property type="chains" value="c=1-84"/>
</dbReference>
<dbReference type="PDB" id="7SYU">
    <property type="method" value="EM"/>
    <property type="resolution" value="4.60 A"/>
    <property type="chains" value="c=1-84"/>
</dbReference>
<dbReference type="PDB" id="7SYV">
    <property type="method" value="EM"/>
    <property type="resolution" value="3.90 A"/>
    <property type="chains" value="c=1-84"/>
</dbReference>
<dbReference type="PDB" id="7SYW">
    <property type="method" value="EM"/>
    <property type="resolution" value="3.70 A"/>
    <property type="chains" value="c=1-84"/>
</dbReference>
<dbReference type="PDB" id="7SYX">
    <property type="method" value="EM"/>
    <property type="resolution" value="3.70 A"/>
    <property type="chains" value="c=1-84"/>
</dbReference>
<dbReference type="PDB" id="7TOQ">
    <property type="method" value="EM"/>
    <property type="resolution" value="3.10 A"/>
    <property type="chains" value="AS27=2-84"/>
</dbReference>
<dbReference type="PDB" id="7TOR">
    <property type="method" value="EM"/>
    <property type="resolution" value="2.90 A"/>
    <property type="chains" value="AS27=2-84"/>
</dbReference>
<dbReference type="PDB" id="7UCJ">
    <property type="method" value="EM"/>
    <property type="resolution" value="3.10 A"/>
    <property type="chains" value="Bb=2-84"/>
</dbReference>
<dbReference type="PDB" id="7UCK">
    <property type="method" value="EM"/>
    <property type="resolution" value="2.80 A"/>
    <property type="chains" value="Bb=2-84"/>
</dbReference>
<dbReference type="PDB" id="8BHF">
    <property type="method" value="EM"/>
    <property type="resolution" value="3.10 A"/>
    <property type="chains" value="c3=2-84"/>
</dbReference>
<dbReference type="PDB" id="8BTK">
    <property type="method" value="EM"/>
    <property type="resolution" value="3.50 A"/>
    <property type="chains" value="AA=1-84"/>
</dbReference>
<dbReference type="PDB" id="8P03">
    <property type="method" value="EM"/>
    <property type="resolution" value="3.04 A"/>
    <property type="chains" value="c=1-84"/>
</dbReference>
<dbReference type="PDB" id="8P09">
    <property type="method" value="EM"/>
    <property type="resolution" value="3.30 A"/>
    <property type="chains" value="c=1-84"/>
</dbReference>
<dbReference type="PDB" id="8P2K">
    <property type="method" value="EM"/>
    <property type="resolution" value="2.90 A"/>
    <property type="chains" value="AA=1-84"/>
</dbReference>
<dbReference type="PDB" id="8SCB">
    <property type="method" value="EM"/>
    <property type="resolution" value="2.50 A"/>
    <property type="chains" value="bb=1-84"/>
</dbReference>
<dbReference type="PDB" id="8VFT">
    <property type="method" value="EM"/>
    <property type="resolution" value="3.30 A"/>
    <property type="chains" value="bb=1-84"/>
</dbReference>
<dbReference type="PDB" id="9BDL">
    <property type="method" value="EM"/>
    <property type="resolution" value="2.80 A"/>
    <property type="chains" value="AS27=2-84"/>
</dbReference>
<dbReference type="PDB" id="9BDN">
    <property type="method" value="EM"/>
    <property type="resolution" value="3.10 A"/>
    <property type="chains" value="AS27=2-84"/>
</dbReference>
<dbReference type="PDB" id="9BDP">
    <property type="method" value="EM"/>
    <property type="resolution" value="3.70 A"/>
    <property type="chains" value="AS27=2-84"/>
</dbReference>
<dbReference type="PDB" id="9C8K">
    <property type="method" value="EM"/>
    <property type="resolution" value="3.10 A"/>
    <property type="chains" value="b=1-84"/>
</dbReference>
<dbReference type="PDB" id="9F1B">
    <property type="method" value="EM"/>
    <property type="resolution" value="3.01 A"/>
    <property type="chains" value="AA=1-84"/>
</dbReference>
<dbReference type="PDB" id="9F1C">
    <property type="method" value="EM"/>
    <property type="resolution" value="3.78 A"/>
    <property type="chains" value="AA=1-84"/>
</dbReference>
<dbReference type="PDB" id="9F1D">
    <property type="method" value="EM"/>
    <property type="resolution" value="3.26 A"/>
    <property type="chains" value="AA=1-84"/>
</dbReference>
<dbReference type="PDBsum" id="3JAG"/>
<dbReference type="PDBsum" id="3JAH"/>
<dbReference type="PDBsum" id="3JAI"/>
<dbReference type="PDBsum" id="4D5L"/>
<dbReference type="PDBsum" id="4D61"/>
<dbReference type="PDBsum" id="4KZX"/>
<dbReference type="PDBsum" id="4KZY"/>
<dbReference type="PDBsum" id="4KZZ"/>
<dbReference type="PDBsum" id="5K0Y"/>
<dbReference type="PDBsum" id="5LZS"/>
<dbReference type="PDBsum" id="5LZT"/>
<dbReference type="PDBsum" id="5LZU"/>
<dbReference type="PDBsum" id="5LZV"/>
<dbReference type="PDBsum" id="5LZW"/>
<dbReference type="PDBsum" id="5LZX"/>
<dbReference type="PDBsum" id="5LZY"/>
<dbReference type="PDBsum" id="5LZZ"/>
<dbReference type="PDBsum" id="6D90"/>
<dbReference type="PDBsum" id="6D9J"/>
<dbReference type="PDBsum" id="6HCF"/>
<dbReference type="PDBsum" id="6HCJ"/>
<dbReference type="PDBsum" id="6HCM"/>
<dbReference type="PDBsum" id="6HCQ"/>
<dbReference type="PDBsum" id="6P4G"/>
<dbReference type="PDBsum" id="6P4H"/>
<dbReference type="PDBsum" id="6P5I"/>
<dbReference type="PDBsum" id="6P5J"/>
<dbReference type="PDBsum" id="6P5K"/>
<dbReference type="PDBsum" id="6P5N"/>
<dbReference type="PDBsum" id="6R5Q"/>
<dbReference type="PDBsum" id="6R6G"/>
<dbReference type="PDBsum" id="6R6P"/>
<dbReference type="PDBsum" id="6R7Q"/>
<dbReference type="PDBsum" id="6SGC"/>
<dbReference type="PDBsum" id="6W2S"/>
<dbReference type="PDBsum" id="6W2T"/>
<dbReference type="PDBsum" id="6YAL"/>
<dbReference type="PDBsum" id="6YAM"/>
<dbReference type="PDBsum" id="6YAN"/>
<dbReference type="PDBsum" id="6ZVK"/>
<dbReference type="PDBsum" id="7A01"/>
<dbReference type="PDBsum" id="7JQB"/>
<dbReference type="PDBsum" id="7JQC"/>
<dbReference type="PDBsum" id="7MDZ"/>
<dbReference type="PDBsum" id="7NWG"/>
<dbReference type="PDBsum" id="7NWI"/>
<dbReference type="PDBsum" id="7O7Y"/>
<dbReference type="PDBsum" id="7O7Z"/>
<dbReference type="PDBsum" id="7O80"/>
<dbReference type="PDBsum" id="7O81"/>
<dbReference type="PDBsum" id="7OYD"/>
<dbReference type="PDBsum" id="7SYG"/>
<dbReference type="PDBsum" id="7SYH"/>
<dbReference type="PDBsum" id="7SYI"/>
<dbReference type="PDBsum" id="7SYJ"/>
<dbReference type="PDBsum" id="7SYK"/>
<dbReference type="PDBsum" id="7SYL"/>
<dbReference type="PDBsum" id="7SYM"/>
<dbReference type="PDBsum" id="7SYN"/>
<dbReference type="PDBsum" id="7SYO"/>
<dbReference type="PDBsum" id="7SYP"/>
<dbReference type="PDBsum" id="7SYQ"/>
<dbReference type="PDBsum" id="7SYR"/>
<dbReference type="PDBsum" id="7SYS"/>
<dbReference type="PDBsum" id="7SYT"/>
<dbReference type="PDBsum" id="7SYU"/>
<dbReference type="PDBsum" id="7SYV"/>
<dbReference type="PDBsum" id="7SYW"/>
<dbReference type="PDBsum" id="7SYX"/>
<dbReference type="PDBsum" id="7TOQ"/>
<dbReference type="PDBsum" id="7TOR"/>
<dbReference type="PDBsum" id="7UCJ"/>
<dbReference type="PDBsum" id="7UCK"/>
<dbReference type="PDBsum" id="8BHF"/>
<dbReference type="PDBsum" id="8BTK"/>
<dbReference type="PDBsum" id="8P03"/>
<dbReference type="PDBsum" id="8P09"/>
<dbReference type="PDBsum" id="8P2K"/>
<dbReference type="PDBsum" id="8SCB"/>
<dbReference type="PDBsum" id="8VFT"/>
<dbReference type="PDBsum" id="9BDL"/>
<dbReference type="PDBsum" id="9BDN"/>
<dbReference type="PDBsum" id="9BDP"/>
<dbReference type="PDBsum" id="9C8K"/>
<dbReference type="PDBsum" id="9F1B"/>
<dbReference type="PDBsum" id="9F1C"/>
<dbReference type="PDBsum" id="9F1D"/>
<dbReference type="EMDB" id="EMD-0099"/>
<dbReference type="EMDB" id="EMD-0100"/>
<dbReference type="EMDB" id="EMD-0192"/>
<dbReference type="EMDB" id="EMD-0194"/>
<dbReference type="EMDB" id="EMD-0195"/>
<dbReference type="EMDB" id="EMD-0197"/>
<dbReference type="EMDB" id="EMD-10181"/>
<dbReference type="EMDB" id="EMD-10760"/>
<dbReference type="EMDB" id="EMD-10761"/>
<dbReference type="EMDB" id="EMD-10762"/>
<dbReference type="EMDB" id="EMD-11459"/>
<dbReference type="EMDB" id="EMD-11590"/>
<dbReference type="EMDB" id="EMD-12631"/>
<dbReference type="EMDB" id="EMD-12633"/>
<dbReference type="EMDB" id="EMD-12756"/>
<dbReference type="EMDB" id="EMD-12757"/>
<dbReference type="EMDB" id="EMD-12758"/>
<dbReference type="EMDB" id="EMD-12759"/>
<dbReference type="EMDB" id="EMD-13114"/>
<dbReference type="EMDB" id="EMD-16052"/>
<dbReference type="EMDB" id="EMD-16232"/>
<dbReference type="EMDB" id="EMD-17329"/>
<dbReference type="EMDB" id="EMD-17330"/>
<dbReference type="EMDB" id="EMD-17367"/>
<dbReference type="EMDB" id="EMD-20248"/>
<dbReference type="EMDB" id="EMD-20249"/>
<dbReference type="EMDB" id="EMD-20255"/>
<dbReference type="EMDB" id="EMD-20256"/>
<dbReference type="EMDB" id="EMD-20257"/>
<dbReference type="EMDB" id="EMD-20258"/>
<dbReference type="EMDB" id="EMD-21529"/>
<dbReference type="EMDB" id="EMD-21530"/>
<dbReference type="EMDB" id="EMD-22432"/>
<dbReference type="EMDB" id="EMD-22433"/>
<dbReference type="EMDB" id="EMD-23785"/>
<dbReference type="EMDB" id="EMD-25527"/>
<dbReference type="EMDB" id="EMD-25528"/>
<dbReference type="EMDB" id="EMD-25529"/>
<dbReference type="EMDB" id="EMD-25530"/>
<dbReference type="EMDB" id="EMD-25531"/>
<dbReference type="EMDB" id="EMD-25532"/>
<dbReference type="EMDB" id="EMD-25533"/>
<dbReference type="EMDB" id="EMD-25534"/>
<dbReference type="EMDB" id="EMD-25535"/>
<dbReference type="EMDB" id="EMD-25536"/>
<dbReference type="EMDB" id="EMD-25537"/>
<dbReference type="EMDB" id="EMD-25538"/>
<dbReference type="EMDB" id="EMD-25539"/>
<dbReference type="EMDB" id="EMD-25540"/>
<dbReference type="EMDB" id="EMD-25541"/>
<dbReference type="EMDB" id="EMD-25542"/>
<dbReference type="EMDB" id="EMD-25543"/>
<dbReference type="EMDB" id="EMD-25544"/>
<dbReference type="EMDB" id="EMD-26035"/>
<dbReference type="EMDB" id="EMD-26036"/>
<dbReference type="EMDB" id="EMD-26444"/>
<dbReference type="EMDB" id="EMD-26445"/>
<dbReference type="EMDB" id="EMD-40344"/>
<dbReference type="EMDB" id="EMD-4130"/>
<dbReference type="EMDB" id="EMD-4131"/>
<dbReference type="EMDB" id="EMD-4132"/>
<dbReference type="EMDB" id="EMD-4133"/>
<dbReference type="EMDB" id="EMD-4134"/>
<dbReference type="EMDB" id="EMD-4135"/>
<dbReference type="EMDB" id="EMD-4136"/>
<dbReference type="EMDB" id="EMD-4137"/>
<dbReference type="EMDB" id="EMD-43189"/>
<dbReference type="EMDB" id="EMD-44461"/>
<dbReference type="EMDB" id="EMD-44463"/>
<dbReference type="EMDB" id="EMD-44464"/>
<dbReference type="EMDB" id="EMD-45307"/>
<dbReference type="EMDB" id="EMD-4729"/>
<dbReference type="EMDB" id="EMD-4735"/>
<dbReference type="EMDB" id="EMD-4737"/>
<dbReference type="EMDB" id="EMD-4745"/>
<dbReference type="EMDB" id="EMD-50124"/>
<dbReference type="EMDB" id="EMD-50125"/>
<dbReference type="EMDB" id="EMD-50126"/>
<dbReference type="EMDB" id="EMD-7834"/>
<dbReference type="EMDB" id="EMD-7836"/>
<dbReference type="EMDB" id="EMD-8190"/>
<dbReference type="SMR" id="G1TZ76"/>
<dbReference type="FunCoup" id="G1TZ76">
    <property type="interactions" value="941"/>
</dbReference>
<dbReference type="IntAct" id="G1TZ76">
    <property type="interactions" value="1"/>
</dbReference>
<dbReference type="STRING" id="9986.ENSOCUP00000010135"/>
<dbReference type="PaxDb" id="9986-ENSOCUP00000010135"/>
<dbReference type="Ensembl" id="ENSOCUT00000009733.2">
    <property type="protein sequence ID" value="ENSOCUP00000022234.1"/>
    <property type="gene ID" value="ENSOCUG00000022442.1"/>
</dbReference>
<dbReference type="Ensembl" id="ENSOCUT00000011789.3">
    <property type="protein sequence ID" value="ENSOCUP00000010135.2"/>
    <property type="gene ID" value="ENSOCUG00000011792.3"/>
</dbReference>
<dbReference type="Ensembl" id="ENSOCUT00000023068.2">
    <property type="protein sequence ID" value="ENSOCUP00000022396.1"/>
    <property type="gene ID" value="ENSOCUG00000025002.2"/>
</dbReference>
<dbReference type="Ensembl" id="ENSOCUT00000029745.1">
    <property type="protein sequence ID" value="ENSOCUP00000021064.1"/>
    <property type="gene ID" value="ENSOCUG00000024168.1"/>
</dbReference>
<dbReference type="GeneID" id="100356638"/>
<dbReference type="KEGG" id="ocu:100345044"/>
<dbReference type="KEGG" id="ocu:100345694"/>
<dbReference type="KEGG" id="ocu:100348261"/>
<dbReference type="KEGG" id="ocu:100356638"/>
<dbReference type="CTD" id="6232"/>
<dbReference type="eggNOG" id="KOG1779">
    <property type="taxonomic scope" value="Eukaryota"/>
</dbReference>
<dbReference type="GeneTree" id="ENSGT00950000182891"/>
<dbReference type="HOGENOM" id="CLU_130128_3_0_1"/>
<dbReference type="OMA" id="CASILCQ"/>
<dbReference type="OrthoDB" id="5567124at2759"/>
<dbReference type="TreeFam" id="TF300265"/>
<dbReference type="EvolutionaryTrace" id="G1TZ76"/>
<dbReference type="Proteomes" id="UP000001811">
    <property type="component" value="Chromosome 1"/>
</dbReference>
<dbReference type="Proteomes" id="UP000001811">
    <property type="component" value="Chromosome 13"/>
</dbReference>
<dbReference type="Proteomes" id="UP000001811">
    <property type="component" value="Chromosome 17"/>
</dbReference>
<dbReference type="Bgee" id="ENSOCUG00000011792">
    <property type="expression patterns" value="Expressed in aorta and 15 other cell types or tissues"/>
</dbReference>
<dbReference type="GO" id="GO:0022626">
    <property type="term" value="C:cytosolic ribosome"/>
    <property type="evidence" value="ECO:0000314"/>
    <property type="project" value="UniProtKB"/>
</dbReference>
<dbReference type="GO" id="GO:0022627">
    <property type="term" value="C:cytosolic small ribosomal subunit"/>
    <property type="evidence" value="ECO:0007669"/>
    <property type="project" value="Ensembl"/>
</dbReference>
<dbReference type="GO" id="GO:0005730">
    <property type="term" value="C:nucleolus"/>
    <property type="evidence" value="ECO:0007669"/>
    <property type="project" value="UniProtKB-SubCell"/>
</dbReference>
<dbReference type="GO" id="GO:0014069">
    <property type="term" value="C:postsynaptic density"/>
    <property type="evidence" value="ECO:0007669"/>
    <property type="project" value="Ensembl"/>
</dbReference>
<dbReference type="GO" id="GO:0032040">
    <property type="term" value="C:small-subunit processome"/>
    <property type="evidence" value="ECO:0007669"/>
    <property type="project" value="Ensembl"/>
</dbReference>
<dbReference type="GO" id="GO:0003735">
    <property type="term" value="F:structural constituent of ribosome"/>
    <property type="evidence" value="ECO:0000314"/>
    <property type="project" value="UniProtKB"/>
</dbReference>
<dbReference type="GO" id="GO:0008270">
    <property type="term" value="F:zinc ion binding"/>
    <property type="evidence" value="ECO:0007669"/>
    <property type="project" value="UniProtKB-KW"/>
</dbReference>
<dbReference type="GO" id="GO:0042274">
    <property type="term" value="P:ribosomal small subunit biogenesis"/>
    <property type="evidence" value="ECO:0007669"/>
    <property type="project" value="Ensembl"/>
</dbReference>
<dbReference type="GO" id="GO:0006364">
    <property type="term" value="P:rRNA processing"/>
    <property type="evidence" value="ECO:0007669"/>
    <property type="project" value="Ensembl"/>
</dbReference>
<dbReference type="GO" id="GO:0006412">
    <property type="term" value="P:translation"/>
    <property type="evidence" value="ECO:0007669"/>
    <property type="project" value="InterPro"/>
</dbReference>
<dbReference type="FunFam" id="2.20.25.100:FF:000001">
    <property type="entry name" value="40S ribosomal protein S27"/>
    <property type="match status" value="1"/>
</dbReference>
<dbReference type="Gene3D" id="2.20.25.100">
    <property type="entry name" value="Zn-binding ribosomal proteins"/>
    <property type="match status" value="1"/>
</dbReference>
<dbReference type="HAMAP" id="MF_00371">
    <property type="entry name" value="Ribosomal_eS27"/>
    <property type="match status" value="1"/>
</dbReference>
<dbReference type="InterPro" id="IPR000592">
    <property type="entry name" value="Ribosomal_eS27"/>
</dbReference>
<dbReference type="InterPro" id="IPR023407">
    <property type="entry name" value="Ribosomal_eS27_Zn-bd_dom_sf"/>
</dbReference>
<dbReference type="InterPro" id="IPR011332">
    <property type="entry name" value="Ribosomal_zn-bd"/>
</dbReference>
<dbReference type="PANTHER" id="PTHR11594">
    <property type="entry name" value="40S RIBOSOMAL PROTEIN S27"/>
    <property type="match status" value="1"/>
</dbReference>
<dbReference type="Pfam" id="PF01667">
    <property type="entry name" value="Ribosomal_S27e"/>
    <property type="match status" value="1"/>
</dbReference>
<dbReference type="SUPFAM" id="SSF57829">
    <property type="entry name" value="Zn-binding ribosomal proteins"/>
    <property type="match status" value="1"/>
</dbReference>
<dbReference type="PROSITE" id="PS01168">
    <property type="entry name" value="RIBOSOMAL_S27E"/>
    <property type="match status" value="1"/>
</dbReference>